<sequence>MSLSVSFIFLLVASIGAVVADSENVLVLTESNFEETINGNEFVLVKFYAPWCVHCKSLAPKYDEAADLLKEEGSDIKLAKVDATENQALASKFEVRGYPTILYFKSGKPTKYTGGRATAQIVDWVKKKSGPTVTTVESVEQLEELKGKTRVVVLGYFKDAKSDAATIYNEVADSVDDAFFAVAGSAEVAAAASLNEDGVALIRTDGDDSETSTIAEAEITNTIALKQWLHAYKLSAVTEFTHESAQEIVGGDLKKFHFLIIRKSDSSFDETIAKFTEVAKKFRAKIVFVLLDVDVEENARILEFLGVDAKNTPANRIVSLADQVEKFKPQEGEDFEAFTNSYLEGKSAQDLKAQDLPEDWNALPVKVLVASNFNEIALDETKTVFVKFYAPWCGHCKQLVPVWDELAEKYESNPNVVIAKLDATLNELADVKVNSFPTLKLWPAGSSTPVDYDGDRNLEKFEEFVNKYAGSASESETASQDHEEL</sequence>
<comment type="catalytic activity">
    <reaction>
        <text>Catalyzes the rearrangement of -S-S- bonds in proteins.</text>
        <dbReference type="EC" id="5.3.4.1"/>
    </reaction>
</comment>
<comment type="subcellular location">
    <subcellularLocation>
        <location evidence="4">Endoplasmic reticulum lumen</location>
    </subcellularLocation>
</comment>
<comment type="similarity">
    <text evidence="5">Belongs to the protein disulfide isomerase family.</text>
</comment>
<keyword id="KW-1015">Disulfide bond</keyword>
<keyword id="KW-0256">Endoplasmic reticulum</keyword>
<keyword id="KW-0413">Isomerase</keyword>
<keyword id="KW-0676">Redox-active center</keyword>
<keyword id="KW-1185">Reference proteome</keyword>
<keyword id="KW-0677">Repeat</keyword>
<keyword id="KW-0732">Signal</keyword>
<dbReference type="EC" id="5.3.4.1"/>
<dbReference type="EMBL" id="U95074">
    <property type="protein sequence ID" value="AAB94647.1"/>
    <property type="molecule type" value="Genomic_DNA"/>
</dbReference>
<dbReference type="EMBL" id="Z37139">
    <property type="protein sequence ID" value="CAA85491.1"/>
    <property type="molecule type" value="Genomic_DNA"/>
</dbReference>
<dbReference type="PIR" id="S71863">
    <property type="entry name" value="S71863"/>
</dbReference>
<dbReference type="RefSeq" id="NP_497746.1">
    <property type="nucleotide sequence ID" value="NM_065345.7"/>
</dbReference>
<dbReference type="SMR" id="Q17967"/>
<dbReference type="BioGRID" id="40712">
    <property type="interactions" value="19"/>
</dbReference>
<dbReference type="DIP" id="DIP-24653N"/>
<dbReference type="FunCoup" id="Q17967">
    <property type="interactions" value="1035"/>
</dbReference>
<dbReference type="IntAct" id="Q17967">
    <property type="interactions" value="1"/>
</dbReference>
<dbReference type="MINT" id="Q17967"/>
<dbReference type="STRING" id="6239.C14B1.1.2"/>
<dbReference type="PaxDb" id="6239-C14B1.1.1"/>
<dbReference type="PeptideAtlas" id="Q17967"/>
<dbReference type="EnsemblMetazoa" id="C14B1.1.1">
    <property type="protein sequence ID" value="C14B1.1.1"/>
    <property type="gene ID" value="WBGene00003962"/>
</dbReference>
<dbReference type="GeneID" id="175472"/>
<dbReference type="KEGG" id="cel:CELE_C14B1.1"/>
<dbReference type="UCSC" id="C14B1.1.1">
    <property type="organism name" value="c. elegans"/>
</dbReference>
<dbReference type="AGR" id="WB:WBGene00003962"/>
<dbReference type="CTD" id="175472"/>
<dbReference type="WormBase" id="C14B1.1">
    <property type="protein sequence ID" value="CE00897"/>
    <property type="gene ID" value="WBGene00003962"/>
    <property type="gene designation" value="pdi-1"/>
</dbReference>
<dbReference type="eggNOG" id="KOG0190">
    <property type="taxonomic scope" value="Eukaryota"/>
</dbReference>
<dbReference type="GeneTree" id="ENSGT00970000196645"/>
<dbReference type="HOGENOM" id="CLU_025879_1_0_1"/>
<dbReference type="InParanoid" id="Q17967"/>
<dbReference type="OMA" id="PTLKLWP"/>
<dbReference type="OrthoDB" id="427280at2759"/>
<dbReference type="PhylomeDB" id="Q17967"/>
<dbReference type="Reactome" id="R-CEL-1650814">
    <property type="pathway name" value="Collagen biosynthesis and modifying enzymes"/>
</dbReference>
<dbReference type="Reactome" id="R-CEL-264876">
    <property type="pathway name" value="Insulin processing"/>
</dbReference>
<dbReference type="Reactome" id="R-CEL-381426">
    <property type="pathway name" value="Regulation of Insulin-like Growth Factor (IGF) transport and uptake by Insulin-like Growth Factor Binding Proteins (IGFBPs)"/>
</dbReference>
<dbReference type="Reactome" id="R-CEL-8957275">
    <property type="pathway name" value="Post-translational protein phosphorylation"/>
</dbReference>
<dbReference type="Reactome" id="R-CEL-8964041">
    <property type="pathway name" value="LDL remodeling"/>
</dbReference>
<dbReference type="PRO" id="PR:Q17967"/>
<dbReference type="Proteomes" id="UP000001940">
    <property type="component" value="Chromosome III"/>
</dbReference>
<dbReference type="Bgee" id="WBGene00003962">
    <property type="expression patterns" value="Expressed in germ line (C elegans) and 4 other cell types or tissues"/>
</dbReference>
<dbReference type="GO" id="GO:0005783">
    <property type="term" value="C:endoplasmic reticulum"/>
    <property type="evidence" value="ECO:0000318"/>
    <property type="project" value="GO_Central"/>
</dbReference>
<dbReference type="GO" id="GO:0005788">
    <property type="term" value="C:endoplasmic reticulum lumen"/>
    <property type="evidence" value="ECO:0007669"/>
    <property type="project" value="UniProtKB-SubCell"/>
</dbReference>
<dbReference type="GO" id="GO:0003756">
    <property type="term" value="F:protein disulfide isomerase activity"/>
    <property type="evidence" value="ECO:0000314"/>
    <property type="project" value="WormBase"/>
</dbReference>
<dbReference type="GO" id="GO:0003810">
    <property type="term" value="F:protein-glutamine gamma-glutamyltransferase activity"/>
    <property type="evidence" value="ECO:0000314"/>
    <property type="project" value="WormBase"/>
</dbReference>
<dbReference type="GO" id="GO:0036498">
    <property type="term" value="P:IRE1-mediated unfolded protein response"/>
    <property type="evidence" value="ECO:0007007"/>
    <property type="project" value="WormBase"/>
</dbReference>
<dbReference type="GO" id="GO:0006457">
    <property type="term" value="P:protein folding"/>
    <property type="evidence" value="ECO:0000318"/>
    <property type="project" value="GO_Central"/>
</dbReference>
<dbReference type="GO" id="GO:0034976">
    <property type="term" value="P:response to endoplasmic reticulum stress"/>
    <property type="evidence" value="ECO:0000318"/>
    <property type="project" value="GO_Central"/>
</dbReference>
<dbReference type="CDD" id="cd02961">
    <property type="entry name" value="PDI_a_family"/>
    <property type="match status" value="1"/>
</dbReference>
<dbReference type="CDD" id="cd02995">
    <property type="entry name" value="PDI_a_PDI_a'_C"/>
    <property type="match status" value="1"/>
</dbReference>
<dbReference type="CDD" id="cd02982">
    <property type="entry name" value="PDI_b'_family"/>
    <property type="match status" value="1"/>
</dbReference>
<dbReference type="CDD" id="cd02981">
    <property type="entry name" value="PDI_b_family"/>
    <property type="match status" value="1"/>
</dbReference>
<dbReference type="FunFam" id="3.40.30.10:FF:000023">
    <property type="entry name" value="Protein disulfide-isomerase"/>
    <property type="match status" value="1"/>
</dbReference>
<dbReference type="FunFam" id="3.40.30.10:FF:000185">
    <property type="entry name" value="Protein disulfide-isomerase"/>
    <property type="match status" value="1"/>
</dbReference>
<dbReference type="FunFam" id="3.40.30.10:FF:000482">
    <property type="entry name" value="Protein disulfide-isomerase"/>
    <property type="match status" value="1"/>
</dbReference>
<dbReference type="Gene3D" id="3.40.30.10">
    <property type="entry name" value="Glutaredoxin"/>
    <property type="match status" value="4"/>
</dbReference>
<dbReference type="InterPro" id="IPR005788">
    <property type="entry name" value="PDI_thioredoxin-like_dom"/>
</dbReference>
<dbReference type="InterPro" id="IPR005792">
    <property type="entry name" value="Prot_disulphide_isomerase"/>
</dbReference>
<dbReference type="InterPro" id="IPR036249">
    <property type="entry name" value="Thioredoxin-like_sf"/>
</dbReference>
<dbReference type="InterPro" id="IPR017937">
    <property type="entry name" value="Thioredoxin_CS"/>
</dbReference>
<dbReference type="InterPro" id="IPR013766">
    <property type="entry name" value="Thioredoxin_domain"/>
</dbReference>
<dbReference type="NCBIfam" id="TIGR01130">
    <property type="entry name" value="ER_PDI_fam"/>
    <property type="match status" value="1"/>
</dbReference>
<dbReference type="NCBIfam" id="TIGR01126">
    <property type="entry name" value="pdi_dom"/>
    <property type="match status" value="2"/>
</dbReference>
<dbReference type="PANTHER" id="PTHR18929">
    <property type="entry name" value="PROTEIN DISULFIDE ISOMERASE"/>
    <property type="match status" value="1"/>
</dbReference>
<dbReference type="PANTHER" id="PTHR18929:SF69">
    <property type="entry name" value="PROTEIN DISULFIDE-ISOMERASE 1-RELATED"/>
    <property type="match status" value="1"/>
</dbReference>
<dbReference type="Pfam" id="PF00085">
    <property type="entry name" value="Thioredoxin"/>
    <property type="match status" value="2"/>
</dbReference>
<dbReference type="Pfam" id="PF13848">
    <property type="entry name" value="Thioredoxin_6"/>
    <property type="match status" value="1"/>
</dbReference>
<dbReference type="PRINTS" id="PR00421">
    <property type="entry name" value="THIOREDOXIN"/>
</dbReference>
<dbReference type="SUPFAM" id="SSF52833">
    <property type="entry name" value="Thioredoxin-like"/>
    <property type="match status" value="4"/>
</dbReference>
<dbReference type="PROSITE" id="PS00014">
    <property type="entry name" value="ER_TARGET"/>
    <property type="match status" value="1"/>
</dbReference>
<dbReference type="PROSITE" id="PS00194">
    <property type="entry name" value="THIOREDOXIN_1"/>
    <property type="match status" value="2"/>
</dbReference>
<dbReference type="PROSITE" id="PS51352">
    <property type="entry name" value="THIOREDOXIN_2"/>
    <property type="match status" value="2"/>
</dbReference>
<evidence type="ECO:0000250" key="1"/>
<evidence type="ECO:0000255" key="2"/>
<evidence type="ECO:0000255" key="3">
    <source>
        <dbReference type="PROSITE-ProRule" id="PRU00691"/>
    </source>
</evidence>
<evidence type="ECO:0000255" key="4">
    <source>
        <dbReference type="PROSITE-ProRule" id="PRU10138"/>
    </source>
</evidence>
<evidence type="ECO:0000305" key="5"/>
<reference key="1">
    <citation type="journal article" date="1996" name="Biochem. J.">
        <title>Baculovirus expression of two protein disulphide isomerase isoforms from Caenorhabditis elegans and characterization of prolyl 4-hydroxylases containing one of these polypeptides as their beta subunit.</title>
        <authorList>
            <person name="Veijola J."/>
            <person name="Annunen P."/>
            <person name="Koivunen P."/>
            <person name="Page A.P."/>
            <person name="Pihlajaniemi T."/>
            <person name="Kivirikko K.I."/>
        </authorList>
    </citation>
    <scope>NUCLEOTIDE SEQUENCE [GENOMIC DNA]</scope>
</reference>
<reference key="2">
    <citation type="journal article" date="1998" name="Science">
        <title>Genome sequence of the nematode C. elegans: a platform for investigating biology.</title>
        <authorList>
            <consortium name="The C. elegans sequencing consortium"/>
        </authorList>
    </citation>
    <scope>NUCLEOTIDE SEQUENCE [LARGE SCALE GENOMIC DNA]</scope>
    <source>
        <strain>Bristol N2</strain>
    </source>
</reference>
<name>PDI1_CAEEL</name>
<proteinExistence type="inferred from homology"/>
<protein>
    <recommendedName>
        <fullName>Protein disulfide-isomerase 1</fullName>
        <shortName>PDI 1</shortName>
        <ecNumber>5.3.4.1</ecNumber>
    </recommendedName>
    <alternativeName>
        <fullName>Prolyl 4-hydroxylase subunit beta-1</fullName>
    </alternativeName>
</protein>
<organism>
    <name type="scientific">Caenorhabditis elegans</name>
    <dbReference type="NCBI Taxonomy" id="6239"/>
    <lineage>
        <taxon>Eukaryota</taxon>
        <taxon>Metazoa</taxon>
        <taxon>Ecdysozoa</taxon>
        <taxon>Nematoda</taxon>
        <taxon>Chromadorea</taxon>
        <taxon>Rhabditida</taxon>
        <taxon>Rhabditina</taxon>
        <taxon>Rhabditomorpha</taxon>
        <taxon>Rhabditoidea</taxon>
        <taxon>Rhabditidae</taxon>
        <taxon>Peloderinae</taxon>
        <taxon>Caenorhabditis</taxon>
    </lineage>
</organism>
<feature type="signal peptide" evidence="2">
    <location>
        <begin position="1"/>
        <end position="20"/>
    </location>
</feature>
<feature type="chain" id="PRO_0000034203" description="Protein disulfide-isomerase 1">
    <location>
        <begin position="21"/>
        <end position="485"/>
    </location>
</feature>
<feature type="domain" description="Thioredoxin 1" evidence="3">
    <location>
        <begin position="21"/>
        <end position="130"/>
    </location>
</feature>
<feature type="domain" description="Thioredoxin 2" evidence="3">
    <location>
        <begin position="342"/>
        <end position="470"/>
    </location>
</feature>
<feature type="short sequence motif" description="Prevents secretion from ER" evidence="4">
    <location>
        <begin position="482"/>
        <end position="485"/>
    </location>
</feature>
<feature type="active site" description="Nucleophile" evidence="1">
    <location>
        <position position="393"/>
    </location>
</feature>
<feature type="active site" description="Nucleophile" evidence="1">
    <location>
        <position position="396"/>
    </location>
</feature>
<feature type="site" description="Contributes to redox potential value" evidence="1">
    <location>
        <position position="394"/>
    </location>
</feature>
<feature type="site" description="Contributes to redox potential value" evidence="1">
    <location>
        <position position="395"/>
    </location>
</feature>
<feature type="site" description="Lowers pKa of C-terminal Cys of second active site" evidence="1">
    <location>
        <position position="456"/>
    </location>
</feature>
<feature type="disulfide bond" description="Redox-active" evidence="3">
    <location>
        <begin position="52"/>
        <end position="55"/>
    </location>
</feature>
<feature type="disulfide bond" description="Redox-active" evidence="3">
    <location>
        <begin position="393"/>
        <end position="396"/>
    </location>
</feature>
<gene>
    <name type="primary">pdi-1</name>
    <name type="ORF">C14B1.1</name>
</gene>
<accession>Q17967</accession>